<name>RT17_MOUSE</name>
<feature type="transit peptide" description="Mitochondrion" evidence="2">
    <location>
        <begin position="1"/>
        <end position="20"/>
    </location>
</feature>
<feature type="chain" id="PRO_0000030624" description="Small ribosomal subunit protein uS17m">
    <location>
        <begin position="21"/>
        <end position="120"/>
    </location>
</feature>
<gene>
    <name type="primary">Mrps17</name>
    <name type="synonym">Rpms17</name>
</gene>
<comment type="subunit">
    <text evidence="1">Component of the mitochondrial ribosome small subunit (28S) which comprises a 12S rRNA and about 30 distinct proteins.</text>
</comment>
<comment type="subcellular location">
    <subcellularLocation>
        <location evidence="1">Mitochondrion</location>
    </subcellularLocation>
</comment>
<comment type="similarity">
    <text evidence="3">Belongs to the universal ribosomal protein uS17 family.</text>
</comment>
<evidence type="ECO:0000250" key="1">
    <source>
        <dbReference type="UniProtKB" id="P82916"/>
    </source>
</evidence>
<evidence type="ECO:0000255" key="2"/>
<evidence type="ECO:0000305" key="3"/>
<proteinExistence type="evidence at protein level"/>
<organism>
    <name type="scientific">Mus musculus</name>
    <name type="common">Mouse</name>
    <dbReference type="NCBI Taxonomy" id="10090"/>
    <lineage>
        <taxon>Eukaryota</taxon>
        <taxon>Metazoa</taxon>
        <taxon>Chordata</taxon>
        <taxon>Craniata</taxon>
        <taxon>Vertebrata</taxon>
        <taxon>Euteleostomi</taxon>
        <taxon>Mammalia</taxon>
        <taxon>Eutheria</taxon>
        <taxon>Euarchontoglires</taxon>
        <taxon>Glires</taxon>
        <taxon>Rodentia</taxon>
        <taxon>Myomorpha</taxon>
        <taxon>Muroidea</taxon>
        <taxon>Muridae</taxon>
        <taxon>Murinae</taxon>
        <taxon>Mus</taxon>
        <taxon>Mus</taxon>
    </lineage>
</organism>
<protein>
    <recommendedName>
        <fullName evidence="3">Small ribosomal subunit protein uS17m</fullName>
    </recommendedName>
    <alternativeName>
        <fullName>28S ribosomal protein S17, mitochondrial</fullName>
        <shortName>MRP-S17</shortName>
        <shortName>S17mt</shortName>
    </alternativeName>
</protein>
<reference key="1">
    <citation type="journal article" date="2001" name="J. Biol. Chem.">
        <title>Proteomic analysis of the mammalian mitochondrial ribosome. Identification of protein components in the 28S small subunit.</title>
        <authorList>
            <person name="Suzuki T."/>
            <person name="Terasaki M."/>
            <person name="Takemoto-Hori C."/>
            <person name="Hanada T."/>
            <person name="Ueda T."/>
            <person name="Wada A."/>
            <person name="Watanabe K."/>
        </authorList>
    </citation>
    <scope>NUCLEOTIDE SEQUENCE [MRNA]</scope>
</reference>
<reference key="2">
    <citation type="journal article" date="2005" name="Science">
        <title>The transcriptional landscape of the mammalian genome.</title>
        <authorList>
            <person name="Carninci P."/>
            <person name="Kasukawa T."/>
            <person name="Katayama S."/>
            <person name="Gough J."/>
            <person name="Frith M.C."/>
            <person name="Maeda N."/>
            <person name="Oyama R."/>
            <person name="Ravasi T."/>
            <person name="Lenhard B."/>
            <person name="Wells C."/>
            <person name="Kodzius R."/>
            <person name="Shimokawa K."/>
            <person name="Bajic V.B."/>
            <person name="Brenner S.E."/>
            <person name="Batalov S."/>
            <person name="Forrest A.R."/>
            <person name="Zavolan M."/>
            <person name="Davis M.J."/>
            <person name="Wilming L.G."/>
            <person name="Aidinis V."/>
            <person name="Allen J.E."/>
            <person name="Ambesi-Impiombato A."/>
            <person name="Apweiler R."/>
            <person name="Aturaliya R.N."/>
            <person name="Bailey T.L."/>
            <person name="Bansal M."/>
            <person name="Baxter L."/>
            <person name="Beisel K.W."/>
            <person name="Bersano T."/>
            <person name="Bono H."/>
            <person name="Chalk A.M."/>
            <person name="Chiu K.P."/>
            <person name="Choudhary V."/>
            <person name="Christoffels A."/>
            <person name="Clutterbuck D.R."/>
            <person name="Crowe M.L."/>
            <person name="Dalla E."/>
            <person name="Dalrymple B.P."/>
            <person name="de Bono B."/>
            <person name="Della Gatta G."/>
            <person name="di Bernardo D."/>
            <person name="Down T."/>
            <person name="Engstrom P."/>
            <person name="Fagiolini M."/>
            <person name="Faulkner G."/>
            <person name="Fletcher C.F."/>
            <person name="Fukushima T."/>
            <person name="Furuno M."/>
            <person name="Futaki S."/>
            <person name="Gariboldi M."/>
            <person name="Georgii-Hemming P."/>
            <person name="Gingeras T.R."/>
            <person name="Gojobori T."/>
            <person name="Green R.E."/>
            <person name="Gustincich S."/>
            <person name="Harbers M."/>
            <person name="Hayashi Y."/>
            <person name="Hensch T.K."/>
            <person name="Hirokawa N."/>
            <person name="Hill D."/>
            <person name="Huminiecki L."/>
            <person name="Iacono M."/>
            <person name="Ikeo K."/>
            <person name="Iwama A."/>
            <person name="Ishikawa T."/>
            <person name="Jakt M."/>
            <person name="Kanapin A."/>
            <person name="Katoh M."/>
            <person name="Kawasawa Y."/>
            <person name="Kelso J."/>
            <person name="Kitamura H."/>
            <person name="Kitano H."/>
            <person name="Kollias G."/>
            <person name="Krishnan S.P."/>
            <person name="Kruger A."/>
            <person name="Kummerfeld S.K."/>
            <person name="Kurochkin I.V."/>
            <person name="Lareau L.F."/>
            <person name="Lazarevic D."/>
            <person name="Lipovich L."/>
            <person name="Liu J."/>
            <person name="Liuni S."/>
            <person name="McWilliam S."/>
            <person name="Madan Babu M."/>
            <person name="Madera M."/>
            <person name="Marchionni L."/>
            <person name="Matsuda H."/>
            <person name="Matsuzawa S."/>
            <person name="Miki H."/>
            <person name="Mignone F."/>
            <person name="Miyake S."/>
            <person name="Morris K."/>
            <person name="Mottagui-Tabar S."/>
            <person name="Mulder N."/>
            <person name="Nakano N."/>
            <person name="Nakauchi H."/>
            <person name="Ng P."/>
            <person name="Nilsson R."/>
            <person name="Nishiguchi S."/>
            <person name="Nishikawa S."/>
            <person name="Nori F."/>
            <person name="Ohara O."/>
            <person name="Okazaki Y."/>
            <person name="Orlando V."/>
            <person name="Pang K.C."/>
            <person name="Pavan W.J."/>
            <person name="Pavesi G."/>
            <person name="Pesole G."/>
            <person name="Petrovsky N."/>
            <person name="Piazza S."/>
            <person name="Reed J."/>
            <person name="Reid J.F."/>
            <person name="Ring B.Z."/>
            <person name="Ringwald M."/>
            <person name="Rost B."/>
            <person name="Ruan Y."/>
            <person name="Salzberg S.L."/>
            <person name="Sandelin A."/>
            <person name="Schneider C."/>
            <person name="Schoenbach C."/>
            <person name="Sekiguchi K."/>
            <person name="Semple C.A."/>
            <person name="Seno S."/>
            <person name="Sessa L."/>
            <person name="Sheng Y."/>
            <person name="Shibata Y."/>
            <person name="Shimada H."/>
            <person name="Shimada K."/>
            <person name="Silva D."/>
            <person name="Sinclair B."/>
            <person name="Sperling S."/>
            <person name="Stupka E."/>
            <person name="Sugiura K."/>
            <person name="Sultana R."/>
            <person name="Takenaka Y."/>
            <person name="Taki K."/>
            <person name="Tammoja K."/>
            <person name="Tan S.L."/>
            <person name="Tang S."/>
            <person name="Taylor M.S."/>
            <person name="Tegner J."/>
            <person name="Teichmann S.A."/>
            <person name="Ueda H.R."/>
            <person name="van Nimwegen E."/>
            <person name="Verardo R."/>
            <person name="Wei C.L."/>
            <person name="Yagi K."/>
            <person name="Yamanishi H."/>
            <person name="Zabarovsky E."/>
            <person name="Zhu S."/>
            <person name="Zimmer A."/>
            <person name="Hide W."/>
            <person name="Bult C."/>
            <person name="Grimmond S.M."/>
            <person name="Teasdale R.D."/>
            <person name="Liu E.T."/>
            <person name="Brusic V."/>
            <person name="Quackenbush J."/>
            <person name="Wahlestedt C."/>
            <person name="Mattick J.S."/>
            <person name="Hume D.A."/>
            <person name="Kai C."/>
            <person name="Sasaki D."/>
            <person name="Tomaru Y."/>
            <person name="Fukuda S."/>
            <person name="Kanamori-Katayama M."/>
            <person name="Suzuki M."/>
            <person name="Aoki J."/>
            <person name="Arakawa T."/>
            <person name="Iida J."/>
            <person name="Imamura K."/>
            <person name="Itoh M."/>
            <person name="Kato T."/>
            <person name="Kawaji H."/>
            <person name="Kawagashira N."/>
            <person name="Kawashima T."/>
            <person name="Kojima M."/>
            <person name="Kondo S."/>
            <person name="Konno H."/>
            <person name="Nakano K."/>
            <person name="Ninomiya N."/>
            <person name="Nishio T."/>
            <person name="Okada M."/>
            <person name="Plessy C."/>
            <person name="Shibata K."/>
            <person name="Shiraki T."/>
            <person name="Suzuki S."/>
            <person name="Tagami M."/>
            <person name="Waki K."/>
            <person name="Watahiki A."/>
            <person name="Okamura-Oho Y."/>
            <person name="Suzuki H."/>
            <person name="Kawai J."/>
            <person name="Hayashizaki Y."/>
        </authorList>
    </citation>
    <scope>NUCLEOTIDE SEQUENCE [LARGE SCALE MRNA]</scope>
    <source>
        <strain>C57BL/6J</strain>
        <tissue>Brain</tissue>
        <tissue>Pancreas</tissue>
        <tissue>Tongue</tissue>
    </source>
</reference>
<reference key="3">
    <citation type="journal article" date="2004" name="Genome Res.">
        <title>The status, quality, and expansion of the NIH full-length cDNA project: the Mammalian Gene Collection (MGC).</title>
        <authorList>
            <consortium name="The MGC Project Team"/>
        </authorList>
    </citation>
    <scope>NUCLEOTIDE SEQUENCE [LARGE SCALE MRNA]</scope>
    <source>
        <strain>FVB/N</strain>
    </source>
</reference>
<reference key="4">
    <citation type="journal article" date="2010" name="Cell">
        <title>A tissue-specific atlas of mouse protein phosphorylation and expression.</title>
        <authorList>
            <person name="Huttlin E.L."/>
            <person name="Jedrychowski M.P."/>
            <person name="Elias J.E."/>
            <person name="Goswami T."/>
            <person name="Rad R."/>
            <person name="Beausoleil S.A."/>
            <person name="Villen J."/>
            <person name="Haas W."/>
            <person name="Sowa M.E."/>
            <person name="Gygi S.P."/>
        </authorList>
    </citation>
    <scope>IDENTIFICATION BY MASS SPECTROMETRY [LARGE SCALE ANALYSIS]</scope>
    <source>
        <tissue>Brain</tissue>
        <tissue>Brown adipose tissue</tissue>
        <tissue>Heart</tissue>
        <tissue>Kidney</tissue>
        <tissue>Liver</tissue>
        <tissue>Lung</tissue>
        <tissue>Pancreas</tissue>
        <tissue>Testis</tissue>
    </source>
</reference>
<keyword id="KW-0002">3D-structure</keyword>
<keyword id="KW-0496">Mitochondrion</keyword>
<keyword id="KW-1185">Reference proteome</keyword>
<keyword id="KW-0687">Ribonucleoprotein</keyword>
<keyword id="KW-0689">Ribosomal protein</keyword>
<keyword id="KW-0694">RNA-binding</keyword>
<keyword id="KW-0699">rRNA-binding</keyword>
<keyword id="KW-0809">Transit peptide</keyword>
<sequence length="120" mass="13382">MSIVRSSVHAKWVVGKVIGTAMIKTAKVRATRLVLDPYLLKYFNKRKTYFAHDALQQCSVGDIVLLRALPVPRSKHVKHELAEIIFKVGRVIDPVTGKPCAGTAYLESPLSEPREELKVS</sequence>
<accession>Q9CQE3</accession>
<dbReference type="EMBL" id="AB049951">
    <property type="protein sequence ID" value="BAB41004.1"/>
    <property type="molecule type" value="mRNA"/>
</dbReference>
<dbReference type="EMBL" id="AK009568">
    <property type="protein sequence ID" value="BAB26365.1"/>
    <property type="molecule type" value="mRNA"/>
</dbReference>
<dbReference type="EMBL" id="AK003008">
    <property type="protein sequence ID" value="BAB22509.1"/>
    <property type="molecule type" value="mRNA"/>
</dbReference>
<dbReference type="EMBL" id="AK007356">
    <property type="protein sequence ID" value="BAB24983.1"/>
    <property type="molecule type" value="mRNA"/>
</dbReference>
<dbReference type="EMBL" id="BC003890">
    <property type="protein sequence ID" value="AAH03890.1"/>
    <property type="molecule type" value="mRNA"/>
</dbReference>
<dbReference type="CCDS" id="CCDS19697.1"/>
<dbReference type="RefSeq" id="NP_001343883.1">
    <property type="nucleotide sequence ID" value="NM_001356954.1"/>
</dbReference>
<dbReference type="RefSeq" id="NP_001343884.1">
    <property type="nucleotide sequence ID" value="NM_001356955.1"/>
</dbReference>
<dbReference type="RefSeq" id="NP_001343885.1">
    <property type="nucleotide sequence ID" value="NM_001356956.1"/>
</dbReference>
<dbReference type="RefSeq" id="NP_001343886.1">
    <property type="nucleotide sequence ID" value="NM_001356957.1"/>
</dbReference>
<dbReference type="RefSeq" id="NP_001343887.1">
    <property type="nucleotide sequence ID" value="NM_001356958.1"/>
</dbReference>
<dbReference type="RefSeq" id="NP_001343888.1">
    <property type="nucleotide sequence ID" value="NM_001356959.1"/>
</dbReference>
<dbReference type="RefSeq" id="NP_079726.1">
    <property type="nucleotide sequence ID" value="NM_025450.5"/>
</dbReference>
<dbReference type="RefSeq" id="XP_006504383.1">
    <property type="nucleotide sequence ID" value="XM_006504320.2"/>
</dbReference>
<dbReference type="RefSeq" id="XP_006504384.1">
    <property type="nucleotide sequence ID" value="XM_006504321.2"/>
</dbReference>
<dbReference type="RefSeq" id="XP_006504385.1">
    <property type="nucleotide sequence ID" value="XM_006504322.2"/>
</dbReference>
<dbReference type="RefSeq" id="XP_006504386.1">
    <property type="nucleotide sequence ID" value="XM_006504323.2"/>
</dbReference>
<dbReference type="RefSeq" id="XP_006504387.1">
    <property type="nucleotide sequence ID" value="XM_006504324.3"/>
</dbReference>
<dbReference type="RefSeq" id="XP_011239147.1">
    <property type="nucleotide sequence ID" value="XM_011240845.2"/>
</dbReference>
<dbReference type="RefSeq" id="XP_030110612.1">
    <property type="nucleotide sequence ID" value="XM_030254752.1"/>
</dbReference>
<dbReference type="RefSeq" id="XP_030110613.1">
    <property type="nucleotide sequence ID" value="XM_030254753.1"/>
</dbReference>
<dbReference type="PDB" id="7PNT">
    <property type="method" value="EM"/>
    <property type="resolution" value="3.19 A"/>
    <property type="chains" value="N=1-120"/>
</dbReference>
<dbReference type="PDB" id="7PNU">
    <property type="method" value="EM"/>
    <property type="resolution" value="3.06 A"/>
    <property type="chains" value="N=1-120"/>
</dbReference>
<dbReference type="PDB" id="7PNV">
    <property type="method" value="EM"/>
    <property type="resolution" value="3.06 A"/>
    <property type="chains" value="N=1-120"/>
</dbReference>
<dbReference type="PDB" id="7PNW">
    <property type="method" value="EM"/>
    <property type="resolution" value="3.09 A"/>
    <property type="chains" value="N=1-120"/>
</dbReference>
<dbReference type="PDBsum" id="7PNT"/>
<dbReference type="PDBsum" id="7PNU"/>
<dbReference type="PDBsum" id="7PNV"/>
<dbReference type="PDBsum" id="7PNW"/>
<dbReference type="EMDB" id="EMD-13551"/>
<dbReference type="EMDB" id="EMD-13552"/>
<dbReference type="EMDB" id="EMD-13553"/>
<dbReference type="EMDB" id="EMD-13554"/>
<dbReference type="SMR" id="Q9CQE3"/>
<dbReference type="BioGRID" id="211333">
    <property type="interactions" value="4"/>
</dbReference>
<dbReference type="ComplexPortal" id="CPX-5301">
    <property type="entry name" value="28S mitochondrial small ribosomal subunit"/>
</dbReference>
<dbReference type="FunCoup" id="Q9CQE3">
    <property type="interactions" value="2149"/>
</dbReference>
<dbReference type="IntAct" id="Q9CQE3">
    <property type="interactions" value="1"/>
</dbReference>
<dbReference type="MINT" id="Q9CQE3"/>
<dbReference type="STRING" id="10090.ENSMUSP00000112779"/>
<dbReference type="iPTMnet" id="Q9CQE3"/>
<dbReference type="PhosphoSitePlus" id="Q9CQE3"/>
<dbReference type="SwissPalm" id="Q9CQE3"/>
<dbReference type="PaxDb" id="10090-ENSMUSP00000114012"/>
<dbReference type="PeptideAtlas" id="Q9CQE3"/>
<dbReference type="ProteomicsDB" id="260739"/>
<dbReference type="Pumba" id="Q9CQE3"/>
<dbReference type="DNASU" id="66258"/>
<dbReference type="Ensembl" id="ENSMUST00000042191.12">
    <property type="protein sequence ID" value="ENSMUSP00000040281.6"/>
    <property type="gene ID" value="ENSMUSG00000034211.15"/>
</dbReference>
<dbReference type="Ensembl" id="ENSMUST00000118420.8">
    <property type="protein sequence ID" value="ENSMUSP00000112993.2"/>
    <property type="gene ID" value="ENSMUSG00000034211.15"/>
</dbReference>
<dbReference type="Ensembl" id="ENSMUST00000119576.8">
    <property type="protein sequence ID" value="ENSMUSP00000112779.2"/>
    <property type="gene ID" value="ENSMUSG00000034211.15"/>
</dbReference>
<dbReference type="Ensembl" id="ENSMUST00000119604.8">
    <property type="protein sequence ID" value="ENSMUSP00000114012.2"/>
    <property type="gene ID" value="ENSMUSG00000034211.15"/>
</dbReference>
<dbReference type="Ensembl" id="ENSMUST00000119985.2">
    <property type="protein sequence ID" value="ENSMUSP00000112762.2"/>
    <property type="gene ID" value="ENSMUSG00000034211.15"/>
</dbReference>
<dbReference type="Ensembl" id="ENSMUST00000121339.2">
    <property type="protein sequence ID" value="ENSMUSP00000114125.2"/>
    <property type="gene ID" value="ENSMUSG00000034211.15"/>
</dbReference>
<dbReference type="Ensembl" id="ENSMUST00000121813.8">
    <property type="protein sequence ID" value="ENSMUSP00000114059.2"/>
    <property type="gene ID" value="ENSMUSG00000034211.15"/>
</dbReference>
<dbReference type="GeneID" id="66258"/>
<dbReference type="KEGG" id="mmu:66258"/>
<dbReference type="UCSC" id="uc008ztb.1">
    <property type="organism name" value="mouse"/>
</dbReference>
<dbReference type="AGR" id="MGI:1913508"/>
<dbReference type="CTD" id="51373"/>
<dbReference type="MGI" id="MGI:1913508">
    <property type="gene designation" value="Mrps17"/>
</dbReference>
<dbReference type="VEuPathDB" id="HostDB:ENSMUSG00000034211"/>
<dbReference type="eggNOG" id="KOG3447">
    <property type="taxonomic scope" value="Eukaryota"/>
</dbReference>
<dbReference type="GeneTree" id="ENSGT00530000064130"/>
<dbReference type="HOGENOM" id="CLU_073626_5_0_1"/>
<dbReference type="InParanoid" id="Q9CQE3"/>
<dbReference type="OMA" id="TVHAKWI"/>
<dbReference type="OrthoDB" id="274752at2759"/>
<dbReference type="PhylomeDB" id="Q9CQE3"/>
<dbReference type="TreeFam" id="TF326484"/>
<dbReference type="Reactome" id="R-MMU-5389840">
    <property type="pathway name" value="Mitochondrial translation elongation"/>
</dbReference>
<dbReference type="Reactome" id="R-MMU-5419276">
    <property type="pathway name" value="Mitochondrial translation termination"/>
</dbReference>
<dbReference type="BioGRID-ORCS" id="66258">
    <property type="hits" value="16 hits in 81 CRISPR screens"/>
</dbReference>
<dbReference type="ChiTaRS" id="Mrps17">
    <property type="organism name" value="mouse"/>
</dbReference>
<dbReference type="PRO" id="PR:Q9CQE3"/>
<dbReference type="Proteomes" id="UP000000589">
    <property type="component" value="Chromosome 5"/>
</dbReference>
<dbReference type="RNAct" id="Q9CQE3">
    <property type="molecule type" value="protein"/>
</dbReference>
<dbReference type="Bgee" id="ENSMUSG00000034211">
    <property type="expression patterns" value="Expressed in interventricular septum and 279 other cell types or tissues"/>
</dbReference>
<dbReference type="ExpressionAtlas" id="Q9CQE3">
    <property type="expression patterns" value="baseline and differential"/>
</dbReference>
<dbReference type="GO" id="GO:0005743">
    <property type="term" value="C:mitochondrial inner membrane"/>
    <property type="evidence" value="ECO:0000303"/>
    <property type="project" value="ComplexPortal"/>
</dbReference>
<dbReference type="GO" id="GO:0005763">
    <property type="term" value="C:mitochondrial small ribosomal subunit"/>
    <property type="evidence" value="ECO:0000250"/>
    <property type="project" value="UniProtKB"/>
</dbReference>
<dbReference type="GO" id="GO:0005739">
    <property type="term" value="C:mitochondrion"/>
    <property type="evidence" value="ECO:0007005"/>
    <property type="project" value="MGI"/>
</dbReference>
<dbReference type="GO" id="GO:0019843">
    <property type="term" value="F:rRNA binding"/>
    <property type="evidence" value="ECO:0007669"/>
    <property type="project" value="UniProtKB-KW"/>
</dbReference>
<dbReference type="GO" id="GO:0003735">
    <property type="term" value="F:structural constituent of ribosome"/>
    <property type="evidence" value="ECO:0000250"/>
    <property type="project" value="UniProtKB"/>
</dbReference>
<dbReference type="GO" id="GO:0032543">
    <property type="term" value="P:mitochondrial translation"/>
    <property type="evidence" value="ECO:0000250"/>
    <property type="project" value="UniProtKB"/>
</dbReference>
<dbReference type="CDD" id="cd00364">
    <property type="entry name" value="Ribosomal_uS17"/>
    <property type="match status" value="1"/>
</dbReference>
<dbReference type="FunFam" id="2.40.50.140:FF:000137">
    <property type="entry name" value="28S ribosomal protein S17, mitochondrial"/>
    <property type="match status" value="1"/>
</dbReference>
<dbReference type="Gene3D" id="2.40.50.140">
    <property type="entry name" value="Nucleic acid-binding proteins"/>
    <property type="match status" value="1"/>
</dbReference>
<dbReference type="InterPro" id="IPR012340">
    <property type="entry name" value="NA-bd_OB-fold"/>
</dbReference>
<dbReference type="InterPro" id="IPR000266">
    <property type="entry name" value="Ribosomal_uS17"/>
</dbReference>
<dbReference type="InterPro" id="IPR039193">
    <property type="entry name" value="Ribosomal_uS17m_metazoa"/>
</dbReference>
<dbReference type="PANTHER" id="PTHR24088">
    <property type="entry name" value="28S RIBOSOMAL PROTEIN S17, MITOCHONDRIAL"/>
    <property type="match status" value="1"/>
</dbReference>
<dbReference type="PANTHER" id="PTHR24088:SF0">
    <property type="entry name" value="SMALL RIBOSOMAL SUBUNIT PROTEIN US17M"/>
    <property type="match status" value="1"/>
</dbReference>
<dbReference type="Pfam" id="PF00366">
    <property type="entry name" value="Ribosomal_S17"/>
    <property type="match status" value="1"/>
</dbReference>
<dbReference type="SUPFAM" id="SSF50249">
    <property type="entry name" value="Nucleic acid-binding proteins"/>
    <property type="match status" value="1"/>
</dbReference>